<comment type="function">
    <text evidence="2">Plays a role in the regulation of cell morphology and cytoskeletal organization. Required in the cortical actin filament dynamics and cell shape. Part of the striatin-interacting phosphatase and kinase (STRIPAK) complexes. STRIPAK complexes have critical roles in protein (de)phosphorylation and are regulators of multiple signaling pathways including Hippo, MAPK, nuclear receptor and cytoskeleton remodeling. Different types of STRIPAK complexes are involved in a variety of biological processes such as cell growth, differentiation, apoptosis, metabolism and immune regulation.</text>
</comment>
<comment type="subunit">
    <text evidence="2 3">Part of the core of STRIPAK complexes composed of PP2A catalytic and scaffolding subunits, the striatins (PP2A regulatory subunits), the striatin-associated proteins MOB4, STRIP1 and STRIP2, PDCD10 and members of the STE20 kinases, such as STK24 and STK26. The STRIPAK complex can be extended by adapter proteins such as SLMAP:SIKE1, CTTNBP2 or CTTNBP2NL. Interacts with CDC42BPB. Interacts with CTTNBP2NL.</text>
</comment>
<comment type="subcellular location">
    <subcellularLocation>
        <location evidence="1">Cytoplasm</location>
    </subcellularLocation>
    <text evidence="1">Enriched on the plasma membrane.</text>
</comment>
<comment type="similarity">
    <text evidence="5">Belongs to the STRIP family.</text>
</comment>
<keyword id="KW-0007">Acetylation</keyword>
<keyword id="KW-0963">Cytoplasm</keyword>
<keyword id="KW-0597">Phosphoprotein</keyword>
<keyword id="KW-1185">Reference proteome</keyword>
<proteinExistence type="evidence at transcript level"/>
<gene>
    <name type="primary">STRIP1</name>
    <name type="synonym">FAM40A</name>
</gene>
<accession>Q0P5J8</accession>
<feature type="chain" id="PRO_0000345020" description="Striatin-interacting protein 1">
    <location>
        <begin position="1"/>
        <end position="837"/>
    </location>
</feature>
<feature type="region of interest" description="Disordered" evidence="4">
    <location>
        <begin position="1"/>
        <end position="67"/>
    </location>
</feature>
<feature type="region of interest" description="Disordered" evidence="4">
    <location>
        <begin position="336"/>
        <end position="423"/>
    </location>
</feature>
<feature type="region of interest" description="Required for STRIPAK core complex formation" evidence="2">
    <location>
        <begin position="796"/>
        <end position="837"/>
    </location>
</feature>
<feature type="compositionally biased region" description="Pro residues" evidence="4">
    <location>
        <begin position="18"/>
        <end position="35"/>
    </location>
</feature>
<feature type="compositionally biased region" description="Basic and acidic residues" evidence="4">
    <location>
        <begin position="47"/>
        <end position="60"/>
    </location>
</feature>
<feature type="compositionally biased region" description="Basic and acidic residues" evidence="4">
    <location>
        <begin position="356"/>
        <end position="377"/>
    </location>
</feature>
<feature type="compositionally biased region" description="Acidic residues" evidence="4">
    <location>
        <begin position="378"/>
        <end position="391"/>
    </location>
</feature>
<feature type="modified residue" description="N-acetylmethionine" evidence="2">
    <location>
        <position position="1"/>
    </location>
</feature>
<feature type="modified residue" description="Phosphoserine" evidence="2">
    <location>
        <position position="59"/>
    </location>
</feature>
<feature type="modified residue" description="Phosphoserine" evidence="2">
    <location>
        <position position="335"/>
    </location>
</feature>
<feature type="modified residue" description="Phosphoserine" evidence="3">
    <location>
        <position position="339"/>
    </location>
</feature>
<feature type="modified residue" description="Phosphoserine" evidence="2">
    <location>
        <position position="788"/>
    </location>
</feature>
<name>STRP1_BOVIN</name>
<evidence type="ECO:0000250" key="1"/>
<evidence type="ECO:0000250" key="2">
    <source>
        <dbReference type="UniProtKB" id="Q5VSL9"/>
    </source>
</evidence>
<evidence type="ECO:0000250" key="3">
    <source>
        <dbReference type="UniProtKB" id="Q8C079"/>
    </source>
</evidence>
<evidence type="ECO:0000256" key="4">
    <source>
        <dbReference type="SAM" id="MobiDB-lite"/>
    </source>
</evidence>
<evidence type="ECO:0000305" key="5"/>
<reference key="1">
    <citation type="submission" date="2006-08" db="EMBL/GenBank/DDBJ databases">
        <authorList>
            <consortium name="NIH - Mammalian Gene Collection (MGC) project"/>
        </authorList>
    </citation>
    <scope>NUCLEOTIDE SEQUENCE [LARGE SCALE MRNA]</scope>
    <source>
        <strain>Hereford</strain>
        <tissue>Fetal skin</tissue>
    </source>
</reference>
<dbReference type="EMBL" id="BC119950">
    <property type="protein sequence ID" value="AAI19951.1"/>
    <property type="molecule type" value="mRNA"/>
</dbReference>
<dbReference type="RefSeq" id="NP_001068964.1">
    <property type="nucleotide sequence ID" value="NM_001075496.1"/>
</dbReference>
<dbReference type="SMR" id="Q0P5J8"/>
<dbReference type="FunCoup" id="Q0P5J8">
    <property type="interactions" value="3136"/>
</dbReference>
<dbReference type="STRING" id="9913.ENSBTAP00000057804"/>
<dbReference type="PaxDb" id="9913-ENSBTAP00000027922"/>
<dbReference type="GeneID" id="511120"/>
<dbReference type="KEGG" id="bta:511120"/>
<dbReference type="CTD" id="85369"/>
<dbReference type="eggNOG" id="KOG3680">
    <property type="taxonomic scope" value="Eukaryota"/>
</dbReference>
<dbReference type="HOGENOM" id="CLU_011008_1_0_1"/>
<dbReference type="InParanoid" id="Q0P5J8"/>
<dbReference type="OrthoDB" id="18234at2759"/>
<dbReference type="TreeFam" id="TF314205"/>
<dbReference type="Proteomes" id="UP000009136">
    <property type="component" value="Unplaced"/>
</dbReference>
<dbReference type="GO" id="GO:0005829">
    <property type="term" value="C:cytosol"/>
    <property type="evidence" value="ECO:0000318"/>
    <property type="project" value="GO_Central"/>
</dbReference>
<dbReference type="GO" id="GO:0090443">
    <property type="term" value="C:FAR/SIN/STRIPAK complex"/>
    <property type="evidence" value="ECO:0000250"/>
    <property type="project" value="UniProtKB"/>
</dbReference>
<dbReference type="GO" id="GO:0030674">
    <property type="term" value="F:protein-macromolecule adaptor activity"/>
    <property type="evidence" value="ECO:0000250"/>
    <property type="project" value="UniProtKB"/>
</dbReference>
<dbReference type="GO" id="GO:0030866">
    <property type="term" value="P:cortical actin cytoskeleton organization"/>
    <property type="evidence" value="ECO:0000250"/>
    <property type="project" value="UniProtKB"/>
</dbReference>
<dbReference type="GO" id="GO:0007010">
    <property type="term" value="P:cytoskeleton organization"/>
    <property type="evidence" value="ECO:0000318"/>
    <property type="project" value="GO_Central"/>
</dbReference>
<dbReference type="GO" id="GO:0035331">
    <property type="term" value="P:negative regulation of hippo signaling"/>
    <property type="evidence" value="ECO:0000250"/>
    <property type="project" value="UniProtKB"/>
</dbReference>
<dbReference type="GO" id="GO:0022604">
    <property type="term" value="P:regulation of cell morphogenesis"/>
    <property type="evidence" value="ECO:0000250"/>
    <property type="project" value="UniProtKB"/>
</dbReference>
<dbReference type="InterPro" id="IPR040185">
    <property type="entry name" value="Far11/STRP"/>
</dbReference>
<dbReference type="InterPro" id="IPR021819">
    <property type="entry name" value="Far11/STRP_C"/>
</dbReference>
<dbReference type="InterPro" id="IPR012486">
    <property type="entry name" value="Far11/STRP_N"/>
</dbReference>
<dbReference type="PANTHER" id="PTHR13239">
    <property type="entry name" value="PROTEIN REQUIRED FOR HYPHAL ANASTOMOSIS HAM-2"/>
    <property type="match status" value="1"/>
</dbReference>
<dbReference type="PANTHER" id="PTHR13239:SF7">
    <property type="entry name" value="STRIATIN-INTERACTING PROTEIN 1"/>
    <property type="match status" value="1"/>
</dbReference>
<dbReference type="Pfam" id="PF11882">
    <property type="entry name" value="DUF3402"/>
    <property type="match status" value="2"/>
</dbReference>
<dbReference type="Pfam" id="PF07923">
    <property type="entry name" value="N1221"/>
    <property type="match status" value="1"/>
</dbReference>
<dbReference type="SMART" id="SM01293">
    <property type="entry name" value="DUF3402"/>
    <property type="match status" value="1"/>
</dbReference>
<dbReference type="SMART" id="SM01292">
    <property type="entry name" value="N1221"/>
    <property type="match status" value="1"/>
</dbReference>
<organism>
    <name type="scientific">Bos taurus</name>
    <name type="common">Bovine</name>
    <dbReference type="NCBI Taxonomy" id="9913"/>
    <lineage>
        <taxon>Eukaryota</taxon>
        <taxon>Metazoa</taxon>
        <taxon>Chordata</taxon>
        <taxon>Craniata</taxon>
        <taxon>Vertebrata</taxon>
        <taxon>Euteleostomi</taxon>
        <taxon>Mammalia</taxon>
        <taxon>Eutheria</taxon>
        <taxon>Laurasiatheria</taxon>
        <taxon>Artiodactyla</taxon>
        <taxon>Ruminantia</taxon>
        <taxon>Pecora</taxon>
        <taxon>Bovidae</taxon>
        <taxon>Bovinae</taxon>
        <taxon>Bos</taxon>
    </lineage>
</organism>
<sequence length="837" mass="95687">MEPAAGTPGPLIMNNKQPQPPPPPPPATAQPPPGAPRTAGGLLPGGKAREFNRNQRKDSEGYSESPDLEFEYADTDKWAAELSELYSYTEGPEFLMNRKCFEEDFRMHVTDKKWTELDTNQHRTHAMRLLDGLEVTAREKRLKVARAILYVAQGTFGECSSEAEVQSWMRYNTFLLLEVGTFNALVELLNMEIDNSAACSSAVRKPAISLADSTDLRVLLNIMYLIVETVHQECEGDKAEWRTMRQTFRAELGSPLYNNEPFAIMLFGMVTKFCSGHAPHFPMKKVLLLLWKTVLCTLGGFEELQSMKAEKRAILGLPPLPEDSIKVIRNMRAASPPASASDLIEQQQKRGRREHKALIKQDNLDAFNERDPYKADDSREEEEENDDDNSLEGETFPLERDEVMPPPLQHPQTDRLTCPKGLPWAPKVREKDIEMFLESSRSKFIGYTLGSDTNTVVGLPRPIHESIKTLKQHKYTSIAEVQAQMEEEYLRSPLSGGEEEVEQVPAETLYQGLLPSLPQYMIALLKILLAAAPTSKAKTDSINILADVLPEEMPTTVLQSMKLGVDVNRHKEVIVKAISAVLLLLLKHFKLNHVYQFEYMAQHLVFANCIPLILKFFNQNIMSYITAKNSISVLDYPHCVVHELPELTAESLEAGDNNQFCWRNLFSCINLLRILNKLTKWKHSRTMMLVVFKSAPILKRALKVKQAMMQLYVLKLLKVQTKYLGRQWRKSNMKTMSAIYQKVRHRLNDDWAYGNDLDARPWDFQAEECALRANIERFNARRYDRAHSNPDFLPVDNCLQSVLGQRVDLPEDFQMNYDLWLEREVFSKPISWEELLQ</sequence>
<protein>
    <recommendedName>
        <fullName>Striatin-interacting protein 1</fullName>
    </recommendedName>
    <alternativeName>
        <fullName>Protein FAM40A</fullName>
    </alternativeName>
</protein>